<comment type="function">
    <text evidence="1">Type IV dipeptidyl-peptidase which removes N-terminal dipeptides sequentially from polypeptides having unsubstituted N-termini provided that the penultimate residue is proline.</text>
</comment>
<comment type="catalytic activity">
    <reaction>
        <text>Release of an N-terminal dipeptide, Xaa-Yaa-|-Zaa-, from a polypeptide, preferentially when Yaa is Pro, provided Zaa is neither Pro nor hydroxyproline.</text>
        <dbReference type="EC" id="3.4.14.5"/>
    </reaction>
</comment>
<comment type="subcellular location">
    <subcellularLocation>
        <location evidence="1">Vacuole membrane</location>
        <topology evidence="1">Single-pass type II membrane protein</topology>
    </subcellularLocation>
    <text evidence="1">Lysosome-like vacuoles.</text>
</comment>
<comment type="similarity">
    <text evidence="4">Belongs to the peptidase S9B family.</text>
</comment>
<keyword id="KW-0031">Aminopeptidase</keyword>
<keyword id="KW-0325">Glycoprotein</keyword>
<keyword id="KW-0378">Hydrolase</keyword>
<keyword id="KW-0472">Membrane</keyword>
<keyword id="KW-0645">Protease</keyword>
<keyword id="KW-1185">Reference proteome</keyword>
<keyword id="KW-0720">Serine protease</keyword>
<keyword id="KW-0735">Signal-anchor</keyword>
<keyword id="KW-0812">Transmembrane</keyword>
<keyword id="KW-1133">Transmembrane helix</keyword>
<keyword id="KW-0926">Vacuole</keyword>
<organism>
    <name type="scientific">Fusarium vanettenii (strain ATCC MYA-4622 / CBS 123669 / FGSC 9596 / NRRL 45880 / 77-13-4)</name>
    <name type="common">Fusarium solani subsp. pisi</name>
    <dbReference type="NCBI Taxonomy" id="660122"/>
    <lineage>
        <taxon>Eukaryota</taxon>
        <taxon>Fungi</taxon>
        <taxon>Dikarya</taxon>
        <taxon>Ascomycota</taxon>
        <taxon>Pezizomycotina</taxon>
        <taxon>Sordariomycetes</taxon>
        <taxon>Hypocreomycetidae</taxon>
        <taxon>Hypocreales</taxon>
        <taxon>Nectriaceae</taxon>
        <taxon>Fusarium</taxon>
        <taxon>Fusarium solani species complex</taxon>
        <taxon>Fusarium vanettenii</taxon>
    </lineage>
</organism>
<gene>
    <name type="primary">DAPB</name>
    <name type="ORF">NECHADRAFT_47100</name>
</gene>
<evidence type="ECO:0000250" key="1"/>
<evidence type="ECO:0000255" key="2"/>
<evidence type="ECO:0000256" key="3">
    <source>
        <dbReference type="SAM" id="MobiDB-lite"/>
    </source>
</evidence>
<evidence type="ECO:0000305" key="4"/>
<name>DAPB_FUSV7</name>
<reference key="1">
    <citation type="journal article" date="2009" name="PLoS Genet.">
        <title>The genome of Nectria haematococca: contribution of supernumerary chromosomes to gene expansion.</title>
        <authorList>
            <person name="Coleman J.J."/>
            <person name="Rounsley S.D."/>
            <person name="Rodriguez-Carres M."/>
            <person name="Kuo A."/>
            <person name="Wasmann C.C."/>
            <person name="Grimwood J."/>
            <person name="Schmutz J."/>
            <person name="Taga M."/>
            <person name="White G.J."/>
            <person name="Zhou S."/>
            <person name="Schwartz D.C."/>
            <person name="Freitag M."/>
            <person name="Ma L.-J."/>
            <person name="Danchin E.G.J."/>
            <person name="Henrissat B."/>
            <person name="Coutinho P.M."/>
            <person name="Nelson D.R."/>
            <person name="Straney D."/>
            <person name="Napoli C.A."/>
            <person name="Barker B.M."/>
            <person name="Gribskov M."/>
            <person name="Rep M."/>
            <person name="Kroken S."/>
            <person name="Molnar I."/>
            <person name="Rensing C."/>
            <person name="Kennell J.C."/>
            <person name="Zamora J."/>
            <person name="Farman M.L."/>
            <person name="Selker E.U."/>
            <person name="Salamov A."/>
            <person name="Shapiro H."/>
            <person name="Pangilinan J."/>
            <person name="Lindquist E."/>
            <person name="Lamers C."/>
            <person name="Grigoriev I.V."/>
            <person name="Geiser D.M."/>
            <person name="Covert S.F."/>
            <person name="Temporini E."/>
            <person name="VanEtten H.D."/>
        </authorList>
    </citation>
    <scope>NUCLEOTIDE SEQUENCE [LARGE SCALE GENOMIC DNA]</scope>
    <source>
        <strain>ATCC MYA-4622 / CBS 123669 / FGSC 9596 / NRRL 45880 / 77-13-4</strain>
    </source>
</reference>
<feature type="chain" id="PRO_0000412150" description="Probable dipeptidyl-aminopeptidase B">
    <location>
        <begin position="1"/>
        <end position="912"/>
    </location>
</feature>
<feature type="topological domain" description="Cytoplasmic" evidence="2">
    <location>
        <begin position="1"/>
        <end position="85"/>
    </location>
</feature>
<feature type="transmembrane region" description="Helical; Signal-anchor for type II membrane protein" evidence="2">
    <location>
        <begin position="86"/>
        <end position="106"/>
    </location>
</feature>
<feature type="topological domain" description="Vacuolar" evidence="2">
    <location>
        <begin position="107"/>
        <end position="912"/>
    </location>
</feature>
<feature type="region of interest" description="Disordered" evidence="3">
    <location>
        <begin position="1"/>
        <end position="74"/>
    </location>
</feature>
<feature type="region of interest" description="Disordered" evidence="3">
    <location>
        <begin position="892"/>
        <end position="912"/>
    </location>
</feature>
<feature type="compositionally biased region" description="Low complexity" evidence="3">
    <location>
        <begin position="16"/>
        <end position="27"/>
    </location>
</feature>
<feature type="compositionally biased region" description="Basic and acidic residues" evidence="3">
    <location>
        <begin position="30"/>
        <end position="50"/>
    </location>
</feature>
<feature type="compositionally biased region" description="Acidic residues" evidence="3">
    <location>
        <begin position="51"/>
        <end position="63"/>
    </location>
</feature>
<feature type="active site" description="Charge relay system" evidence="1">
    <location>
        <position position="749"/>
    </location>
</feature>
<feature type="active site" description="Charge relay system" evidence="1">
    <location>
        <position position="826"/>
    </location>
</feature>
<feature type="active site" description="Charge relay system" evidence="1">
    <location>
        <position position="859"/>
    </location>
</feature>
<feature type="glycosylation site" description="N-linked (GlcNAc...) asparagine" evidence="2">
    <location>
        <position position="344"/>
    </location>
</feature>
<feature type="glycosylation site" description="N-linked (GlcNAc...) asparagine" evidence="2">
    <location>
        <position position="808"/>
    </location>
</feature>
<accession>C7YYG9</accession>
<protein>
    <recommendedName>
        <fullName>Probable dipeptidyl-aminopeptidase B</fullName>
        <shortName>DPAP B</shortName>
        <ecNumber>3.4.14.5</ecNumber>
    </recommendedName>
</protein>
<sequence length="912" mass="102536">MSSALSPEGDRRYSDDSLSSVSTTSLVFERIQEKTEMDADNDKEKDPRALDDEDPLRDEDDLETGPFLGPGASLHREPMDRGLRRILIIVAVVFIGGWLAGLGIFIASGSYHHESDTEHDPDANSRGSGKSLSMDQLFDGTWSPKYHSISWIAGPKGEDGLLLEVGASNKPYIVVEDIRSDKNVATRDDAEPKASNSRTLMEHPYFEYDGKQYSPSWSEPSPDLTKVLLGVDRKKNWRHSFSAIYFVLDVKTQEAEPLVPDQVDARIQLASWSPKSDAVSFTRENNLYIRRLTGDKDVTQITKDGGPEYFYGIPDWVYEEEVFSGRSATWWSDDGKYLAFLRTNETGVPEYPVQFFIERPSGTTPEDGEEAYPEVEQIKYPKAGAHNPVVDLQFYDIGKKDTFSVEIDGAFADDDRIINNLLWAGDKAIVKQTNRVSDVLKVVLVDVPSRKGKTINTININEIDGGWFEISHKMTYIPADPKNGREHDGYVDSVIHEGYDHLAYFTPLDNSEPIMLTKGNWEVDDAPSAVDLANNLVYFIAAKESSIQRHVYSVKLDGSDLQALTDPKTEAYYDASFSKGAGFVFLSYRGPKVPTQKVISTPVSASSYERIIEDNAELADRARRHELPILKYGTLDLDTGVKVNYVERRPPHFDAKKQYPVLFHQYSGPGSQSVTKRFAVDFQAYVAAALGYLVITVDPRGTGFLGRKHRVTVRSKLGVHEAHDHIAAAASFASRPYVDAERLAIWGWSYGGFTTLKTLEQDAGRTFSYGMAVAPVTDWRFYDSIYTERYMRTPQDNPDGYDLSKVANATALGENKRFLLMHGVADDNVHFQNSLTLLDDLDLAGVENYDVHVFPDSDHSIYFHNGNRIVYDKLRNWLINAFNGEWLKVSNPQPQKDPVEKEKRHMVPQALV</sequence>
<proteinExistence type="inferred from homology"/>
<dbReference type="EC" id="3.4.14.5"/>
<dbReference type="EMBL" id="GG698903">
    <property type="protein sequence ID" value="EEU43005.1"/>
    <property type="molecule type" value="Genomic_DNA"/>
</dbReference>
<dbReference type="RefSeq" id="XP_003048718.1">
    <property type="nucleotide sequence ID" value="XM_003048672.1"/>
</dbReference>
<dbReference type="SMR" id="C7YYG9"/>
<dbReference type="FunCoup" id="C7YYG9">
    <property type="interactions" value="350"/>
</dbReference>
<dbReference type="STRING" id="660122.C7YYG9"/>
<dbReference type="ESTHER" id="nech7-dapb">
    <property type="family name" value="DPP4N_Peptidase_S9"/>
</dbReference>
<dbReference type="GlyCosmos" id="C7YYG9">
    <property type="glycosylation" value="2 sites, No reported glycans"/>
</dbReference>
<dbReference type="EnsemblFungi" id="NechaT47100">
    <property type="protein sequence ID" value="NechaP47100"/>
    <property type="gene ID" value="NechaG47100"/>
</dbReference>
<dbReference type="GeneID" id="9665490"/>
<dbReference type="KEGG" id="nhe:NECHADRAFT_47100"/>
<dbReference type="VEuPathDB" id="FungiDB:NECHADRAFT_47100"/>
<dbReference type="eggNOG" id="KOG2100">
    <property type="taxonomic scope" value="Eukaryota"/>
</dbReference>
<dbReference type="HOGENOM" id="CLU_006105_0_1_1"/>
<dbReference type="InParanoid" id="C7YYG9"/>
<dbReference type="OMA" id="MRTPQEN"/>
<dbReference type="OrthoDB" id="16520at2759"/>
<dbReference type="Proteomes" id="UP000005206">
    <property type="component" value="Unassembled WGS sequence"/>
</dbReference>
<dbReference type="GO" id="GO:0000329">
    <property type="term" value="C:fungal-type vacuole membrane"/>
    <property type="evidence" value="ECO:0007669"/>
    <property type="project" value="EnsemblFungi"/>
</dbReference>
<dbReference type="GO" id="GO:0005886">
    <property type="term" value="C:plasma membrane"/>
    <property type="evidence" value="ECO:0007669"/>
    <property type="project" value="TreeGrafter"/>
</dbReference>
<dbReference type="GO" id="GO:0004177">
    <property type="term" value="F:aminopeptidase activity"/>
    <property type="evidence" value="ECO:0007669"/>
    <property type="project" value="UniProtKB-KW"/>
</dbReference>
<dbReference type="GO" id="GO:0008239">
    <property type="term" value="F:dipeptidyl-peptidase activity"/>
    <property type="evidence" value="ECO:0007669"/>
    <property type="project" value="UniProtKB-EC"/>
</dbReference>
<dbReference type="GO" id="GO:0008236">
    <property type="term" value="F:serine-type peptidase activity"/>
    <property type="evidence" value="ECO:0007669"/>
    <property type="project" value="UniProtKB-KW"/>
</dbReference>
<dbReference type="GO" id="GO:0006508">
    <property type="term" value="P:proteolysis"/>
    <property type="evidence" value="ECO:0007669"/>
    <property type="project" value="UniProtKB-KW"/>
</dbReference>
<dbReference type="FunFam" id="3.40.50.1820:FF:000003">
    <property type="entry name" value="Dipeptidyl peptidase 4"/>
    <property type="match status" value="1"/>
</dbReference>
<dbReference type="Gene3D" id="3.40.50.1820">
    <property type="entry name" value="alpha/beta hydrolase"/>
    <property type="match status" value="1"/>
</dbReference>
<dbReference type="Gene3D" id="2.140.10.30">
    <property type="entry name" value="Dipeptidylpeptidase IV, N-terminal domain"/>
    <property type="match status" value="1"/>
</dbReference>
<dbReference type="InterPro" id="IPR029058">
    <property type="entry name" value="AB_hydrolase_fold"/>
</dbReference>
<dbReference type="InterPro" id="IPR001375">
    <property type="entry name" value="Peptidase_S9_cat"/>
</dbReference>
<dbReference type="InterPro" id="IPR002469">
    <property type="entry name" value="Peptidase_S9B_N"/>
</dbReference>
<dbReference type="InterPro" id="IPR050278">
    <property type="entry name" value="Serine_Prot_S9B/DPPIV"/>
</dbReference>
<dbReference type="PANTHER" id="PTHR11731:SF200">
    <property type="entry name" value="DIPEPTIDYL PEPTIDASE 10, ISOFORM B"/>
    <property type="match status" value="1"/>
</dbReference>
<dbReference type="PANTHER" id="PTHR11731">
    <property type="entry name" value="PROTEASE FAMILY S9B,C DIPEPTIDYL-PEPTIDASE IV-RELATED"/>
    <property type="match status" value="1"/>
</dbReference>
<dbReference type="Pfam" id="PF00930">
    <property type="entry name" value="DPPIV_N"/>
    <property type="match status" value="1"/>
</dbReference>
<dbReference type="Pfam" id="PF00326">
    <property type="entry name" value="Peptidase_S9"/>
    <property type="match status" value="1"/>
</dbReference>
<dbReference type="SUPFAM" id="SSF53474">
    <property type="entry name" value="alpha/beta-Hydrolases"/>
    <property type="match status" value="1"/>
</dbReference>
<dbReference type="SUPFAM" id="SSF82171">
    <property type="entry name" value="DPP6 N-terminal domain-like"/>
    <property type="match status" value="1"/>
</dbReference>